<keyword id="KW-0002">3D-structure</keyword>
<keyword id="KW-0025">Alternative splicing</keyword>
<keyword id="KW-0037">Angiogenesis</keyword>
<keyword id="KW-1003">Cell membrane</keyword>
<keyword id="KW-0903">Direct protein sequencing</keyword>
<keyword id="KW-1015">Disulfide bond</keyword>
<keyword id="KW-0325">Glycoprotein</keyword>
<keyword id="KW-0336">GPI-anchor</keyword>
<keyword id="KW-0449">Lipoprotein</keyword>
<keyword id="KW-0472">Membrane</keyword>
<keyword id="KW-1267">Proteomics identification</keyword>
<keyword id="KW-1185">Reference proteome</keyword>
<keyword id="KW-0964">Secreted</keyword>
<keyword id="KW-0732">Signal</keyword>
<keyword id="KW-0043">Tumor suppressor</keyword>
<accession>P20827</accession>
<accession>D3DV86</accession>
<accession>Q5SR60</accession>
<accession>Q5SR61</accession>
<accession>Q6I9T9</accession>
<accession>Q8N578</accession>
<sequence>MEFLWAPLLGLCCSLAAADRHTVFWNSSNPKFRNEDYTIHVQLNDYVDIICPHYEDHSVADAAMEQYILYLVEHEEYQLCQPQSKDQVRWQCNRPSAKHGPEKLSEKFQRFTPFTLGKEFKEGHSYYYISKPIHQHEDRCLRLKVTVSGKITHSPQAHDNPQEKRLAADDPEVRVLHSIGHSAAPRLFPLAWTVLLLPLLLLQTP</sequence>
<reference key="1">
    <citation type="journal article" date="1990" name="Mol. Cell. Biol.">
        <title>A novel immediate-early response gene of endothelium is induced by cytokines and encodes a secreted protein.</title>
        <authorList>
            <person name="Holzman L.B."/>
            <person name="Marks R.M."/>
            <person name="Dixit V.M."/>
        </authorList>
    </citation>
    <scope>NUCLEOTIDE SEQUENCE [MRNA] (ISOFORM 1)</scope>
    <scope>VARIANT VAL-159</scope>
</reference>
<reference key="2">
    <citation type="submission" date="2004-06" db="EMBL/GenBank/DDBJ databases">
        <title>Cloning of human full open reading frames in Gateway(TM) system entry vector (pDONR201).</title>
        <authorList>
            <person name="Ebert L."/>
            <person name="Schick M."/>
            <person name="Neubert P."/>
            <person name="Schatten R."/>
            <person name="Henze S."/>
            <person name="Korn B."/>
        </authorList>
    </citation>
    <scope>NUCLEOTIDE SEQUENCE [LARGE SCALE MRNA] (ISOFORM 1)</scope>
    <scope>VARIANT VAL-159</scope>
</reference>
<reference key="3">
    <citation type="journal article" date="2006" name="Nature">
        <title>The DNA sequence and biological annotation of human chromosome 1.</title>
        <authorList>
            <person name="Gregory S.G."/>
            <person name="Barlow K.F."/>
            <person name="McLay K.E."/>
            <person name="Kaul R."/>
            <person name="Swarbreck D."/>
            <person name="Dunham A."/>
            <person name="Scott C.E."/>
            <person name="Howe K.L."/>
            <person name="Woodfine K."/>
            <person name="Spencer C.C.A."/>
            <person name="Jones M.C."/>
            <person name="Gillson C."/>
            <person name="Searle S."/>
            <person name="Zhou Y."/>
            <person name="Kokocinski F."/>
            <person name="McDonald L."/>
            <person name="Evans R."/>
            <person name="Phillips K."/>
            <person name="Atkinson A."/>
            <person name="Cooper R."/>
            <person name="Jones C."/>
            <person name="Hall R.E."/>
            <person name="Andrews T.D."/>
            <person name="Lloyd C."/>
            <person name="Ainscough R."/>
            <person name="Almeida J.P."/>
            <person name="Ambrose K.D."/>
            <person name="Anderson F."/>
            <person name="Andrew R.W."/>
            <person name="Ashwell R.I.S."/>
            <person name="Aubin K."/>
            <person name="Babbage A.K."/>
            <person name="Bagguley C.L."/>
            <person name="Bailey J."/>
            <person name="Beasley H."/>
            <person name="Bethel G."/>
            <person name="Bird C.P."/>
            <person name="Bray-Allen S."/>
            <person name="Brown J.Y."/>
            <person name="Brown A.J."/>
            <person name="Buckley D."/>
            <person name="Burton J."/>
            <person name="Bye J."/>
            <person name="Carder C."/>
            <person name="Chapman J.C."/>
            <person name="Clark S.Y."/>
            <person name="Clarke G."/>
            <person name="Clee C."/>
            <person name="Cobley V."/>
            <person name="Collier R.E."/>
            <person name="Corby N."/>
            <person name="Coville G.J."/>
            <person name="Davies J."/>
            <person name="Deadman R."/>
            <person name="Dunn M."/>
            <person name="Earthrowl M."/>
            <person name="Ellington A.G."/>
            <person name="Errington H."/>
            <person name="Frankish A."/>
            <person name="Frankland J."/>
            <person name="French L."/>
            <person name="Garner P."/>
            <person name="Garnett J."/>
            <person name="Gay L."/>
            <person name="Ghori M.R.J."/>
            <person name="Gibson R."/>
            <person name="Gilby L.M."/>
            <person name="Gillett W."/>
            <person name="Glithero R.J."/>
            <person name="Grafham D.V."/>
            <person name="Griffiths C."/>
            <person name="Griffiths-Jones S."/>
            <person name="Grocock R."/>
            <person name="Hammond S."/>
            <person name="Harrison E.S.I."/>
            <person name="Hart E."/>
            <person name="Haugen E."/>
            <person name="Heath P.D."/>
            <person name="Holmes S."/>
            <person name="Holt K."/>
            <person name="Howden P.J."/>
            <person name="Hunt A.R."/>
            <person name="Hunt S.E."/>
            <person name="Hunter G."/>
            <person name="Isherwood J."/>
            <person name="James R."/>
            <person name="Johnson C."/>
            <person name="Johnson D."/>
            <person name="Joy A."/>
            <person name="Kay M."/>
            <person name="Kershaw J.K."/>
            <person name="Kibukawa M."/>
            <person name="Kimberley A.M."/>
            <person name="King A."/>
            <person name="Knights A.J."/>
            <person name="Lad H."/>
            <person name="Laird G."/>
            <person name="Lawlor S."/>
            <person name="Leongamornlert D.A."/>
            <person name="Lloyd D.M."/>
            <person name="Loveland J."/>
            <person name="Lovell J."/>
            <person name="Lush M.J."/>
            <person name="Lyne R."/>
            <person name="Martin S."/>
            <person name="Mashreghi-Mohammadi M."/>
            <person name="Matthews L."/>
            <person name="Matthews N.S.W."/>
            <person name="McLaren S."/>
            <person name="Milne S."/>
            <person name="Mistry S."/>
            <person name="Moore M.J.F."/>
            <person name="Nickerson T."/>
            <person name="O'Dell C.N."/>
            <person name="Oliver K."/>
            <person name="Palmeiri A."/>
            <person name="Palmer S.A."/>
            <person name="Parker A."/>
            <person name="Patel D."/>
            <person name="Pearce A.V."/>
            <person name="Peck A.I."/>
            <person name="Pelan S."/>
            <person name="Phelps K."/>
            <person name="Phillimore B.J."/>
            <person name="Plumb R."/>
            <person name="Rajan J."/>
            <person name="Raymond C."/>
            <person name="Rouse G."/>
            <person name="Saenphimmachak C."/>
            <person name="Sehra H.K."/>
            <person name="Sheridan E."/>
            <person name="Shownkeen R."/>
            <person name="Sims S."/>
            <person name="Skuce C.D."/>
            <person name="Smith M."/>
            <person name="Steward C."/>
            <person name="Subramanian S."/>
            <person name="Sycamore N."/>
            <person name="Tracey A."/>
            <person name="Tromans A."/>
            <person name="Van Helmond Z."/>
            <person name="Wall M."/>
            <person name="Wallis J.M."/>
            <person name="White S."/>
            <person name="Whitehead S.L."/>
            <person name="Wilkinson J.E."/>
            <person name="Willey D.L."/>
            <person name="Williams H."/>
            <person name="Wilming L."/>
            <person name="Wray P.W."/>
            <person name="Wu Z."/>
            <person name="Coulson A."/>
            <person name="Vaudin M."/>
            <person name="Sulston J.E."/>
            <person name="Durbin R.M."/>
            <person name="Hubbard T."/>
            <person name="Wooster R."/>
            <person name="Dunham I."/>
            <person name="Carter N.P."/>
            <person name="McVean G."/>
            <person name="Ross M.T."/>
            <person name="Harrow J."/>
            <person name="Olson M.V."/>
            <person name="Beck S."/>
            <person name="Rogers J."/>
            <person name="Bentley D.R."/>
        </authorList>
    </citation>
    <scope>NUCLEOTIDE SEQUENCE [LARGE SCALE GENOMIC DNA]</scope>
</reference>
<reference key="4">
    <citation type="submission" date="2005-09" db="EMBL/GenBank/DDBJ databases">
        <authorList>
            <person name="Mural R.J."/>
            <person name="Istrail S."/>
            <person name="Sutton G.G."/>
            <person name="Florea L."/>
            <person name="Halpern A.L."/>
            <person name="Mobarry C.M."/>
            <person name="Lippert R."/>
            <person name="Walenz B."/>
            <person name="Shatkay H."/>
            <person name="Dew I."/>
            <person name="Miller J.R."/>
            <person name="Flanigan M.J."/>
            <person name="Edwards N.J."/>
            <person name="Bolanos R."/>
            <person name="Fasulo D."/>
            <person name="Halldorsson B.V."/>
            <person name="Hannenhalli S."/>
            <person name="Turner R."/>
            <person name="Yooseph S."/>
            <person name="Lu F."/>
            <person name="Nusskern D.R."/>
            <person name="Shue B.C."/>
            <person name="Zheng X.H."/>
            <person name="Zhong F."/>
            <person name="Delcher A.L."/>
            <person name="Huson D.H."/>
            <person name="Kravitz S.A."/>
            <person name="Mouchard L."/>
            <person name="Reinert K."/>
            <person name="Remington K.A."/>
            <person name="Clark A.G."/>
            <person name="Waterman M.S."/>
            <person name="Eichler E.E."/>
            <person name="Adams M.D."/>
            <person name="Hunkapiller M.W."/>
            <person name="Myers E.W."/>
            <person name="Venter J.C."/>
        </authorList>
    </citation>
    <scope>NUCLEOTIDE SEQUENCE [LARGE SCALE GENOMIC DNA]</scope>
    <scope>VARIANT VAL-159</scope>
</reference>
<reference key="5">
    <citation type="journal article" date="2004" name="Genome Res.">
        <title>The status, quality, and expansion of the NIH full-length cDNA project: the Mammalian Gene Collection (MGC).</title>
        <authorList>
            <consortium name="The MGC Project Team"/>
        </authorList>
    </citation>
    <scope>NUCLEOTIDE SEQUENCE [LARGE SCALE MRNA] (ISOFORM 1)</scope>
    <scope>VARIANT VAL-159</scope>
    <source>
        <tissue>Liver</tissue>
    </source>
</reference>
<reference key="6">
    <citation type="journal article" date="2004" name="Protein Sci.">
        <title>Signal peptide prediction based on analysis of experimentally verified cleavage sites.</title>
        <authorList>
            <person name="Zhang Z."/>
            <person name="Henzel W.J."/>
        </authorList>
    </citation>
    <scope>PROTEIN SEQUENCE OF 19-33</scope>
</reference>
<reference key="7">
    <citation type="journal article" date="1995" name="Oncogene">
        <title>Ligands for the receptor tyrosine kinases hek and elk: isolation of cDNAs encoding a family of proteins.</title>
        <authorList>
            <person name="Kozlosky C.J."/>
            <person name="Maraskovsky E."/>
            <person name="McGrew J.T."/>
            <person name="Vanden Bos T."/>
            <person name="Teepe M."/>
            <person name="Lyman S.D."/>
            <person name="Srinivasan S."/>
            <person name="Fletcher F.A."/>
            <person name="Gayle R.B. III"/>
            <person name="Cerretti D.P."/>
            <person name="Beckmann M.P."/>
        </authorList>
    </citation>
    <scope>GPI-ANCHOR</scope>
</reference>
<reference key="8">
    <citation type="journal article" date="2007" name="Int. J. Oncol.">
        <title>Ephrin-A1 is a negative regulator in glioma through down-regulation of EphA2 and FAK.</title>
        <authorList>
            <person name="Liu D.-P."/>
            <person name="Wang Y."/>
            <person name="Koeffler H.P."/>
            <person name="Xie D."/>
        </authorList>
    </citation>
    <scope>FUNCTION</scope>
    <scope>TISSUE SPECIFICITY</scope>
</reference>
<reference key="9">
    <citation type="journal article" date="2008" name="Oncogene">
        <title>Soluble monomeric EphrinA1 is released from tumor cells and is a functional ligand for the EphA2 receptor.</title>
        <authorList>
            <person name="Wykosky J."/>
            <person name="Palma E."/>
            <person name="Gibo D.M."/>
            <person name="Ringler S."/>
            <person name="Turner C.P."/>
            <person name="Debinski W."/>
        </authorList>
    </citation>
    <scope>FUNCTION</scope>
    <scope>SUBUNIT</scope>
    <scope>SUBCELLULAR LOCATION</scope>
    <scope>PROTEOLYTIC CLEAVAGE</scope>
</reference>
<reference key="10">
    <citation type="journal article" date="2013" name="J. Biol. Chem.">
        <title>Biological and structural characterization of glycosylation on ephrin-A1, a preferred ligand for EphA2 receptor tyrosine kinase.</title>
        <authorList>
            <person name="Ferluga S."/>
            <person name="Hantgan R."/>
            <person name="Goldgur Y."/>
            <person name="Himanen J.P."/>
            <person name="Nikolov D.B."/>
            <person name="Debinski W."/>
        </authorList>
    </citation>
    <scope>GLYCOSYLATION AT ASN-26</scope>
    <scope>INTERACTION WITH EPHA2</scope>
</reference>
<reference key="11">
    <citation type="journal article" date="2009" name="EMBO Rep.">
        <title>Ligand recognition by A-class Eph receptors: crystal structures of the EphA2 ligand-binding domain and the EphA2/ephrin-A1 complex.</title>
        <authorList>
            <person name="Himanen J.P."/>
            <person name="Goldgur Y."/>
            <person name="Miao H."/>
            <person name="Myshkin E."/>
            <person name="Guo H."/>
            <person name="Buck M."/>
            <person name="Nguyen M."/>
            <person name="Rajashankar K.R."/>
            <person name="Wang B."/>
            <person name="Nikolov D.B."/>
        </authorList>
    </citation>
    <scope>X-RAY CRYSTALLOGRAPHY (2.0 ANGSTROMS) OF 19-147 IN COMPLEX WITH EPHA2</scope>
    <scope>SUBUNIT</scope>
    <scope>DISULFIDE BOND</scope>
    <scope>GLYCOSYLATION AT ASN-26</scope>
</reference>
<reference key="12">
    <citation type="journal article" date="2010" name="Proc. Natl. Acad. Sci. U.S.A.">
        <title>Architecture of Eph receptor clusters.</title>
        <authorList>
            <person name="Himanen J.P."/>
            <person name="Yermekbayeva L."/>
            <person name="Janes P.W."/>
            <person name="Walker J.R."/>
            <person name="Xu K."/>
            <person name="Atapattu L."/>
            <person name="Rajashankar K.R."/>
            <person name="Mensinga A."/>
            <person name="Lackmann M."/>
            <person name="Nikolov D.B."/>
            <person name="Dhe-Paganon S."/>
        </authorList>
    </citation>
    <scope>X-RAY CRYSTALLOGRAPHY (2.65 ANGSTROMS) OF 19-171 IN COMPLEX WITH EPHA2</scope>
    <scope>SUBUNIT</scope>
    <scope>GLYCOSYLATION AT ASN-26</scope>
    <scope>DISULFIDE BONDS</scope>
</reference>
<name>EFNA1_HUMAN</name>
<comment type="function">
    <text evidence="5 6">Cell surface GPI-bound ligand for Eph receptors, a family of receptor tyrosine kinases which are crucial for migration, repulsion and adhesion during neuronal, vascular and epithelial development. Binds promiscuously Eph receptors residing on adjacent cells, leading to contact-dependent bidirectional signaling into neighboring cells. Plays an important role in angiogenesis and tumor neovascularization. The recruitment of VAV2, VAV3 and PI3-kinase p85 subunit by phosphorylated EPHA2 is critical for EFNA1-induced RAC1 GTPase activation and vascular endothelial cell migration and assembly. Exerts anti-oncogenic effects in tumor cells through activation and down-regulation of EPHA2. Activates EPHA2 by inducing tyrosine phosphorylation which leads to its internalization and degradation. Acts as a negative regulator in the tumorigenesis of gliomas by down-regulating EPHA2 and FAK. Can evoke collapse of embryonic neuronal growth cone and regulates dendritic spine morphogenesis.</text>
</comment>
<comment type="subunit">
    <text evidence="6 7 8">Monomer. Homodimer. Forms heterodimers with EPHA2. Binds to the receptor tyrosine kinases EPHA2, EPHA3, EPHA4, EPHA5, EPHA6 and EPHA7. Also binds with low affinity to EPHA1.</text>
</comment>
<comment type="interaction">
    <interactant intactId="EBI-715194">
        <id>P20827</id>
    </interactant>
    <interactant intactId="EBI-702104">
        <id>P29317</id>
        <label>EPHA2</label>
    </interactant>
    <organismsDiffer>false</organismsDiffer>
    <experiments>9</experiments>
</comment>
<comment type="subcellular location">
    <subcellularLocation>
        <location evidence="6">Cell membrane</location>
        <topology evidence="6">Lipid-anchor</topology>
        <topology evidence="6">GPI-anchor</topology>
    </subcellularLocation>
</comment>
<comment type="subcellular location">
    <molecule>Ephrin-A1, secreted form</molecule>
    <subcellularLocation>
        <location evidence="6">Secreted</location>
    </subcellularLocation>
</comment>
<comment type="alternative products">
    <event type="alternative splicing"/>
    <isoform>
        <id>P20827-1</id>
        <name>1</name>
        <sequence type="displayed"/>
    </isoform>
    <isoform>
        <id>P20827-2</id>
        <name>2</name>
        <sequence type="described" ref="VSP_017543"/>
    </isoform>
</comment>
<comment type="tissue specificity">
    <text evidence="5">Brain. Down-regulated in primary glioma tissues compared to the normal tissues. The soluble monomeric form is expressed in the glioblastoma multiforme (GBM) and breast cancer cells (at protein level).</text>
</comment>
<comment type="induction">
    <text>By TNF and IL1B/interleukin-1 beta.</text>
</comment>
<comment type="PTM">
    <text>Undergoes proteolysis by a metalloprotease to give rise to a soluble monomeric form.</text>
</comment>
<comment type="PTM">
    <text evidence="10">N-Glycosylation is required for binding to EPHA2 receptor and inducing its internalization.</text>
</comment>
<comment type="similarity">
    <text evidence="2">Belongs to the ephrin family.</text>
</comment>
<protein>
    <recommendedName>
        <fullName>Ephrin-A1</fullName>
    </recommendedName>
    <alternativeName>
        <fullName>EPH-related receptor tyrosine kinase ligand 1</fullName>
        <shortName>LERK-1</shortName>
    </alternativeName>
    <alternativeName>
        <fullName>Immediate early response protein B61</fullName>
    </alternativeName>
    <alternativeName>
        <fullName>Tumor necrosis factor alpha-induced protein 4</fullName>
        <shortName>TNF alpha-induced protein 4</shortName>
    </alternativeName>
    <component>
        <recommendedName>
            <fullName>Ephrin-A1, secreted form</fullName>
        </recommendedName>
    </component>
</protein>
<proteinExistence type="evidence at protein level"/>
<organism>
    <name type="scientific">Homo sapiens</name>
    <name type="common">Human</name>
    <dbReference type="NCBI Taxonomy" id="9606"/>
    <lineage>
        <taxon>Eukaryota</taxon>
        <taxon>Metazoa</taxon>
        <taxon>Chordata</taxon>
        <taxon>Craniata</taxon>
        <taxon>Vertebrata</taxon>
        <taxon>Euteleostomi</taxon>
        <taxon>Mammalia</taxon>
        <taxon>Eutheria</taxon>
        <taxon>Euarchontoglires</taxon>
        <taxon>Primates</taxon>
        <taxon>Haplorrhini</taxon>
        <taxon>Catarrhini</taxon>
        <taxon>Hominidae</taxon>
        <taxon>Homo</taxon>
    </lineage>
</organism>
<gene>
    <name type="primary">EFNA1</name>
    <name type="synonym">EPLG1</name>
    <name type="synonym">LERK1</name>
    <name type="synonym">TNFAIP4</name>
</gene>
<evidence type="ECO:0000255" key="1"/>
<evidence type="ECO:0000255" key="2">
    <source>
        <dbReference type="PROSITE-ProRule" id="PRU00884"/>
    </source>
</evidence>
<evidence type="ECO:0000269" key="3">
    <source>
    </source>
</evidence>
<evidence type="ECO:0000269" key="4">
    <source>
    </source>
</evidence>
<evidence type="ECO:0000269" key="5">
    <source>
    </source>
</evidence>
<evidence type="ECO:0000269" key="6">
    <source>
    </source>
</evidence>
<evidence type="ECO:0000269" key="7">
    <source>
    </source>
</evidence>
<evidence type="ECO:0000269" key="8">
    <source>
    </source>
</evidence>
<evidence type="ECO:0000269" key="9">
    <source>
    </source>
</evidence>
<evidence type="ECO:0000269" key="10">
    <source>
    </source>
</evidence>
<evidence type="ECO:0000269" key="11">
    <source ref="2"/>
</evidence>
<evidence type="ECO:0000269" key="12">
    <source ref="4"/>
</evidence>
<evidence type="ECO:0000305" key="13"/>
<evidence type="ECO:0007744" key="14">
    <source>
        <dbReference type="PDB" id="3HEI"/>
    </source>
</evidence>
<evidence type="ECO:0007829" key="15">
    <source>
        <dbReference type="PDB" id="3HEI"/>
    </source>
</evidence>
<evidence type="ECO:0007829" key="16">
    <source>
        <dbReference type="PDB" id="3MBW"/>
    </source>
</evidence>
<feature type="signal peptide" evidence="3">
    <location>
        <begin position="1"/>
        <end position="18"/>
    </location>
</feature>
<feature type="chain" id="PRO_0000008353" description="Ephrin-A1">
    <location>
        <begin position="19"/>
        <end position="182"/>
    </location>
</feature>
<feature type="chain" id="PRO_0000389630" description="Ephrin-A1, secreted form">
    <location>
        <begin position="19"/>
        <end status="unknown"/>
    </location>
</feature>
<feature type="propeptide" id="PRO_0000008354" description="Removed in mature form" evidence="1">
    <location>
        <begin position="183"/>
        <end position="205"/>
    </location>
</feature>
<feature type="domain" description="Ephrin RBD" evidence="2">
    <location>
        <begin position="19"/>
        <end position="151"/>
    </location>
</feature>
<feature type="lipid moiety-binding region" description="GPI-anchor amidated serine" evidence="1">
    <location>
        <position position="182"/>
    </location>
</feature>
<feature type="glycosylation site" description="N-linked (GlcNAc...) asparagine" evidence="8 10">
    <location>
        <position position="26"/>
    </location>
</feature>
<feature type="disulfide bond" evidence="7 8 14">
    <location>
        <begin position="51"/>
        <end position="92"/>
    </location>
</feature>
<feature type="disulfide bond" evidence="7 8 14">
    <location>
        <begin position="80"/>
        <end position="140"/>
    </location>
</feature>
<feature type="splice variant" id="VSP_017543" description="In isoform 2." evidence="13">
    <location>
        <begin position="131"/>
        <end position="152"/>
    </location>
</feature>
<feature type="sequence variant" id="VAR_014791" description="In dbSNP:rs4745." evidence="4 9 11 12">
    <original>D</original>
    <variation>V</variation>
    <location>
        <position position="159"/>
    </location>
</feature>
<feature type="sequence conflict" description="In Ref. 5; AAH32698." evidence="13" ref="5">
    <original>G</original>
    <variation>A</variation>
    <location>
        <position position="180"/>
    </location>
</feature>
<feature type="strand" evidence="15">
    <location>
        <begin position="20"/>
        <end position="24"/>
    </location>
</feature>
<feature type="helix" evidence="15">
    <location>
        <begin position="30"/>
        <end position="32"/>
    </location>
</feature>
<feature type="strand" evidence="15">
    <location>
        <begin position="38"/>
        <end position="41"/>
    </location>
</feature>
<feature type="strand" evidence="15">
    <location>
        <begin position="46"/>
        <end position="50"/>
    </location>
</feature>
<feature type="helix" evidence="15">
    <location>
        <begin position="61"/>
        <end position="63"/>
    </location>
</feature>
<feature type="strand" evidence="15">
    <location>
        <begin position="67"/>
        <end position="72"/>
    </location>
</feature>
<feature type="helix" evidence="15">
    <location>
        <begin position="74"/>
        <end position="79"/>
    </location>
</feature>
<feature type="helix" evidence="15">
    <location>
        <begin position="85"/>
        <end position="87"/>
    </location>
</feature>
<feature type="strand" evidence="15">
    <location>
        <begin position="88"/>
        <end position="92"/>
    </location>
</feature>
<feature type="strand" evidence="16">
    <location>
        <begin position="98"/>
        <end position="100"/>
    </location>
</feature>
<feature type="strand" evidence="15">
    <location>
        <begin position="103"/>
        <end position="107"/>
    </location>
</feature>
<feature type="strand" evidence="15">
    <location>
        <begin position="125"/>
        <end position="134"/>
    </location>
</feature>
<feature type="strand" evidence="15">
    <location>
        <begin position="142"/>
        <end position="147"/>
    </location>
</feature>
<dbReference type="EMBL" id="M57730">
    <property type="protein sequence ID" value="AAA58388.1"/>
    <property type="molecule type" value="mRNA"/>
</dbReference>
<dbReference type="EMBL" id="CR457416">
    <property type="protein sequence ID" value="CAG33697.1"/>
    <property type="molecule type" value="mRNA"/>
</dbReference>
<dbReference type="EMBL" id="AL691442">
    <property type="status" value="NOT_ANNOTATED_CDS"/>
    <property type="molecule type" value="Genomic_DNA"/>
</dbReference>
<dbReference type="EMBL" id="CH471121">
    <property type="protein sequence ID" value="EAW53131.1"/>
    <property type="molecule type" value="Genomic_DNA"/>
</dbReference>
<dbReference type="EMBL" id="CH471121">
    <property type="protein sequence ID" value="EAW53132.1"/>
    <property type="molecule type" value="Genomic_DNA"/>
</dbReference>
<dbReference type="EMBL" id="BC032698">
    <property type="protein sequence ID" value="AAH32698.1"/>
    <property type="molecule type" value="mRNA"/>
</dbReference>
<dbReference type="EMBL" id="BC095432">
    <property type="protein sequence ID" value="AAH95432.1"/>
    <property type="molecule type" value="mRNA"/>
</dbReference>
<dbReference type="CCDS" id="CCDS1091.1">
    <molecule id="P20827-1"/>
</dbReference>
<dbReference type="CCDS" id="CCDS1092.1">
    <molecule id="P20827-2"/>
</dbReference>
<dbReference type="PIR" id="A36377">
    <property type="entry name" value="A36377"/>
</dbReference>
<dbReference type="RefSeq" id="NP_004419.2">
    <molecule id="P20827-1"/>
    <property type="nucleotide sequence ID" value="NM_004428.2"/>
</dbReference>
<dbReference type="RefSeq" id="NP_872626.1">
    <molecule id="P20827-2"/>
    <property type="nucleotide sequence ID" value="NM_182685.2"/>
</dbReference>
<dbReference type="PDB" id="3CZU">
    <property type="method" value="X-ray"/>
    <property type="resolution" value="2.65 A"/>
    <property type="chains" value="B=17-171"/>
</dbReference>
<dbReference type="PDB" id="3HEI">
    <property type="method" value="X-ray"/>
    <property type="resolution" value="2.00 A"/>
    <property type="chains" value="B/D/F/H/J/L/N/P=18-147"/>
</dbReference>
<dbReference type="PDB" id="3MBW">
    <property type="method" value="X-ray"/>
    <property type="resolution" value="2.81 A"/>
    <property type="chains" value="B=17-171"/>
</dbReference>
<dbReference type="PDBsum" id="3CZU"/>
<dbReference type="PDBsum" id="3HEI"/>
<dbReference type="PDBsum" id="3MBW"/>
<dbReference type="SMR" id="P20827"/>
<dbReference type="BioGRID" id="108262">
    <property type="interactions" value="97"/>
</dbReference>
<dbReference type="DIP" id="DIP-98N"/>
<dbReference type="FunCoup" id="P20827">
    <property type="interactions" value="1228"/>
</dbReference>
<dbReference type="IntAct" id="P20827">
    <property type="interactions" value="12"/>
</dbReference>
<dbReference type="MINT" id="P20827"/>
<dbReference type="STRING" id="9606.ENSP00000357392"/>
<dbReference type="GlyConnect" id="1209">
    <property type="glycosylation" value="4 N-Linked glycans (1 site)"/>
</dbReference>
<dbReference type="GlyCosmos" id="P20827">
    <property type="glycosylation" value="2 sites, 7 glycans"/>
</dbReference>
<dbReference type="GlyGen" id="P20827">
    <property type="glycosylation" value="4 sites, 7 N-linked glycans (1 site), 2 O-linked glycans (3 sites)"/>
</dbReference>
<dbReference type="iPTMnet" id="P20827"/>
<dbReference type="PhosphoSitePlus" id="P20827"/>
<dbReference type="BioMuta" id="EFNA1"/>
<dbReference type="DMDM" id="73920206"/>
<dbReference type="jPOST" id="P20827"/>
<dbReference type="MassIVE" id="P20827"/>
<dbReference type="PaxDb" id="9606-ENSP00000357392"/>
<dbReference type="PeptideAtlas" id="P20827"/>
<dbReference type="ProteomicsDB" id="53809">
    <molecule id="P20827-1"/>
</dbReference>
<dbReference type="ProteomicsDB" id="53810">
    <molecule id="P20827-2"/>
</dbReference>
<dbReference type="Pumba" id="P20827"/>
<dbReference type="Antibodypedia" id="34167">
    <property type="antibodies" value="389 antibodies from 37 providers"/>
</dbReference>
<dbReference type="DNASU" id="1942"/>
<dbReference type="Ensembl" id="ENST00000368406.2">
    <molecule id="P20827-2"/>
    <property type="protein sequence ID" value="ENSP00000357391.2"/>
    <property type="gene ID" value="ENSG00000169242.12"/>
</dbReference>
<dbReference type="Ensembl" id="ENST00000368407.8">
    <molecule id="P20827-1"/>
    <property type="protein sequence ID" value="ENSP00000357392.3"/>
    <property type="gene ID" value="ENSG00000169242.12"/>
</dbReference>
<dbReference type="GeneID" id="1942"/>
<dbReference type="KEGG" id="hsa:1942"/>
<dbReference type="MANE-Select" id="ENST00000368407.8">
    <property type="protein sequence ID" value="ENSP00000357392.3"/>
    <property type="RefSeq nucleotide sequence ID" value="NM_004428.3"/>
    <property type="RefSeq protein sequence ID" value="NP_004419.2"/>
</dbReference>
<dbReference type="UCSC" id="uc001fhh.4">
    <molecule id="P20827-1"/>
    <property type="organism name" value="human"/>
</dbReference>
<dbReference type="AGR" id="HGNC:3221"/>
<dbReference type="CTD" id="1942"/>
<dbReference type="DisGeNET" id="1942"/>
<dbReference type="GeneCards" id="EFNA1"/>
<dbReference type="HGNC" id="HGNC:3221">
    <property type="gene designation" value="EFNA1"/>
</dbReference>
<dbReference type="HPA" id="ENSG00000169242">
    <property type="expression patterns" value="Tissue enhanced (liver)"/>
</dbReference>
<dbReference type="MIM" id="191164">
    <property type="type" value="gene"/>
</dbReference>
<dbReference type="neXtProt" id="NX_P20827"/>
<dbReference type="OpenTargets" id="ENSG00000169242"/>
<dbReference type="PharmGKB" id="PA27656"/>
<dbReference type="VEuPathDB" id="HostDB:ENSG00000169242"/>
<dbReference type="eggNOG" id="KOG3858">
    <property type="taxonomic scope" value="Eukaryota"/>
</dbReference>
<dbReference type="GeneTree" id="ENSGT00940000159919"/>
<dbReference type="HOGENOM" id="CLU_081598_2_0_1"/>
<dbReference type="InParanoid" id="P20827"/>
<dbReference type="OMA" id="QRHTVFW"/>
<dbReference type="OrthoDB" id="8774972at2759"/>
<dbReference type="PAN-GO" id="P20827">
    <property type="GO annotations" value="5 GO annotations based on evolutionary models"/>
</dbReference>
<dbReference type="PhylomeDB" id="P20827"/>
<dbReference type="PathwayCommons" id="P20827"/>
<dbReference type="Reactome" id="R-HSA-2682334">
    <property type="pathway name" value="EPH-Ephrin signaling"/>
</dbReference>
<dbReference type="Reactome" id="R-HSA-3928663">
    <property type="pathway name" value="EPHA-mediated growth cone collapse"/>
</dbReference>
<dbReference type="Reactome" id="R-HSA-3928665">
    <property type="pathway name" value="EPH-ephrin mediated repulsion of cells"/>
</dbReference>
<dbReference type="SignaLink" id="P20827"/>
<dbReference type="SIGNOR" id="P20827"/>
<dbReference type="BioGRID-ORCS" id="1942">
    <property type="hits" value="13 hits in 1157 CRISPR screens"/>
</dbReference>
<dbReference type="ChiTaRS" id="EFNA1">
    <property type="organism name" value="human"/>
</dbReference>
<dbReference type="EvolutionaryTrace" id="P20827"/>
<dbReference type="GeneWiki" id="Ephrin_A1"/>
<dbReference type="GenomeRNAi" id="1942"/>
<dbReference type="Pharos" id="P20827">
    <property type="development level" value="Tbio"/>
</dbReference>
<dbReference type="PRO" id="PR:P20827"/>
<dbReference type="Proteomes" id="UP000005640">
    <property type="component" value="Chromosome 1"/>
</dbReference>
<dbReference type="RNAct" id="P20827">
    <property type="molecule type" value="protein"/>
</dbReference>
<dbReference type="Bgee" id="ENSG00000169242">
    <property type="expression patterns" value="Expressed in right lobe of liver and 188 other cell types or tissues"/>
</dbReference>
<dbReference type="GO" id="GO:0005576">
    <property type="term" value="C:extracellular region"/>
    <property type="evidence" value="ECO:0007669"/>
    <property type="project" value="UniProtKB-SubCell"/>
</dbReference>
<dbReference type="GO" id="GO:0005886">
    <property type="term" value="C:plasma membrane"/>
    <property type="evidence" value="ECO:0000318"/>
    <property type="project" value="GO_Central"/>
</dbReference>
<dbReference type="GO" id="GO:0098552">
    <property type="term" value="C:side of membrane"/>
    <property type="evidence" value="ECO:0007669"/>
    <property type="project" value="UniProtKB-KW"/>
</dbReference>
<dbReference type="GO" id="GO:0046875">
    <property type="term" value="F:ephrin receptor binding"/>
    <property type="evidence" value="ECO:0000353"/>
    <property type="project" value="UniProtKB"/>
</dbReference>
<dbReference type="GO" id="GO:0005102">
    <property type="term" value="F:signaling receptor binding"/>
    <property type="evidence" value="ECO:0000304"/>
    <property type="project" value="ProtInc"/>
</dbReference>
<dbReference type="GO" id="GO:0001525">
    <property type="term" value="P:angiogenesis"/>
    <property type="evidence" value="ECO:0007669"/>
    <property type="project" value="UniProtKB-KW"/>
</dbReference>
<dbReference type="GO" id="GO:0003180">
    <property type="term" value="P:aortic valve morphogenesis"/>
    <property type="evidence" value="ECO:0000250"/>
    <property type="project" value="BHF-UCL"/>
</dbReference>
<dbReference type="GO" id="GO:0007411">
    <property type="term" value="P:axon guidance"/>
    <property type="evidence" value="ECO:0000318"/>
    <property type="project" value="GO_Central"/>
</dbReference>
<dbReference type="GO" id="GO:0016477">
    <property type="term" value="P:cell migration"/>
    <property type="evidence" value="ECO:0000314"/>
    <property type="project" value="UniProtKB"/>
</dbReference>
<dbReference type="GO" id="GO:0007267">
    <property type="term" value="P:cell-cell signaling"/>
    <property type="evidence" value="ECO:0000304"/>
    <property type="project" value="ProtInc"/>
</dbReference>
<dbReference type="GO" id="GO:0021953">
    <property type="term" value="P:central nervous system neuron differentiation"/>
    <property type="evidence" value="ECO:0007669"/>
    <property type="project" value="Ensembl"/>
</dbReference>
<dbReference type="GO" id="GO:0003199">
    <property type="term" value="P:endocardial cushion to mesenchymal transition involved in heart valve formation"/>
    <property type="evidence" value="ECO:0000250"/>
    <property type="project" value="BHF-UCL"/>
</dbReference>
<dbReference type="GO" id="GO:0048013">
    <property type="term" value="P:ephrin receptor signaling pathway"/>
    <property type="evidence" value="ECO:0000314"/>
    <property type="project" value="UniProtKB"/>
</dbReference>
<dbReference type="GO" id="GO:0003183">
    <property type="term" value="P:mitral valve morphogenesis"/>
    <property type="evidence" value="ECO:0000250"/>
    <property type="project" value="BHF-UCL"/>
</dbReference>
<dbReference type="GO" id="GO:0061002">
    <property type="term" value="P:negative regulation of dendritic spine morphogenesis"/>
    <property type="evidence" value="ECO:0000250"/>
    <property type="project" value="UniProtKB"/>
</dbReference>
<dbReference type="GO" id="GO:0010719">
    <property type="term" value="P:negative regulation of epithelial to mesenchymal transition"/>
    <property type="evidence" value="ECO:0000250"/>
    <property type="project" value="BHF-UCL"/>
</dbReference>
<dbReference type="GO" id="GO:0043409">
    <property type="term" value="P:negative regulation of MAPK cascade"/>
    <property type="evidence" value="ECO:0007669"/>
    <property type="project" value="Ensembl"/>
</dbReference>
<dbReference type="GO" id="GO:1903051">
    <property type="term" value="P:negative regulation of proteolysis involved in protein catabolic process"/>
    <property type="evidence" value="ECO:0000316"/>
    <property type="project" value="ARUK-UCL"/>
</dbReference>
<dbReference type="GO" id="GO:0070244">
    <property type="term" value="P:negative regulation of thymocyte apoptotic process"/>
    <property type="evidence" value="ECO:0007669"/>
    <property type="project" value="Ensembl"/>
</dbReference>
<dbReference type="GO" id="GO:0000122">
    <property type="term" value="P:negative regulation of transcription by RNA polymerase II"/>
    <property type="evidence" value="ECO:0000250"/>
    <property type="project" value="BHF-UCL"/>
</dbReference>
<dbReference type="GO" id="GO:0014028">
    <property type="term" value="P:notochord formation"/>
    <property type="evidence" value="ECO:0007669"/>
    <property type="project" value="Ensembl"/>
</dbReference>
<dbReference type="GO" id="GO:1902993">
    <property type="term" value="P:positive regulation of amyloid precursor protein catabolic process"/>
    <property type="evidence" value="ECO:0000316"/>
    <property type="project" value="ARUK-UCL"/>
</dbReference>
<dbReference type="GO" id="GO:1902004">
    <property type="term" value="P:positive regulation of amyloid-beta formation"/>
    <property type="evidence" value="ECO:0000314"/>
    <property type="project" value="ARUK-UCL"/>
</dbReference>
<dbReference type="GO" id="GO:1902533">
    <property type="term" value="P:positive regulation of intracellular signal transduction"/>
    <property type="evidence" value="ECO:0000316"/>
    <property type="project" value="ARUK-UCL"/>
</dbReference>
<dbReference type="GO" id="GO:0043410">
    <property type="term" value="P:positive regulation of MAPK cascade"/>
    <property type="evidence" value="ECO:0007669"/>
    <property type="project" value="Ensembl"/>
</dbReference>
<dbReference type="GO" id="GO:0050731">
    <property type="term" value="P:positive regulation of peptidyl-tyrosine phosphorylation"/>
    <property type="evidence" value="ECO:0000314"/>
    <property type="project" value="UniProtKB"/>
</dbReference>
<dbReference type="GO" id="GO:0050821">
    <property type="term" value="P:protein stabilization"/>
    <property type="evidence" value="ECO:0000316"/>
    <property type="project" value="ARUK-UCL"/>
</dbReference>
<dbReference type="GO" id="GO:0045765">
    <property type="term" value="P:regulation of angiogenesis"/>
    <property type="evidence" value="ECO:0007669"/>
    <property type="project" value="Ensembl"/>
</dbReference>
<dbReference type="GO" id="GO:0050770">
    <property type="term" value="P:regulation of axonogenesis"/>
    <property type="evidence" value="ECO:0007669"/>
    <property type="project" value="Ensembl"/>
</dbReference>
<dbReference type="GO" id="GO:0043535">
    <property type="term" value="P:regulation of blood vessel endothelial cell migration"/>
    <property type="evidence" value="ECO:0007669"/>
    <property type="project" value="Ensembl"/>
</dbReference>
<dbReference type="GO" id="GO:0033628">
    <property type="term" value="P:regulation of cell adhesion mediated by integrin"/>
    <property type="evidence" value="ECO:0000314"/>
    <property type="project" value="UniProtKB"/>
</dbReference>
<dbReference type="GO" id="GO:0050730">
    <property type="term" value="P:regulation of peptidyl-tyrosine phosphorylation"/>
    <property type="evidence" value="ECO:0000250"/>
    <property type="project" value="UniProtKB"/>
</dbReference>
<dbReference type="GO" id="GO:0034446">
    <property type="term" value="P:substrate adhesion-dependent cell spreading"/>
    <property type="evidence" value="ECO:0000314"/>
    <property type="project" value="UniProtKB"/>
</dbReference>
<dbReference type="CDD" id="cd10425">
    <property type="entry name" value="Ephrin-A_Ectodomain"/>
    <property type="match status" value="1"/>
</dbReference>
<dbReference type="FunFam" id="2.60.40.420:FF:000017">
    <property type="entry name" value="ephrin-A1"/>
    <property type="match status" value="1"/>
</dbReference>
<dbReference type="Gene3D" id="2.60.40.420">
    <property type="entry name" value="Cupredoxins - blue copper proteins"/>
    <property type="match status" value="1"/>
</dbReference>
<dbReference type="InterPro" id="IPR008972">
    <property type="entry name" value="Cupredoxin"/>
</dbReference>
<dbReference type="InterPro" id="IPR031328">
    <property type="entry name" value="Ephrin"/>
</dbReference>
<dbReference type="InterPro" id="IPR034252">
    <property type="entry name" value="Ephrin-A_Ecto"/>
</dbReference>
<dbReference type="InterPro" id="IPR019765">
    <property type="entry name" value="Ephrin_CS"/>
</dbReference>
<dbReference type="InterPro" id="IPR001799">
    <property type="entry name" value="Ephrin_RBD"/>
</dbReference>
<dbReference type="PANTHER" id="PTHR11304">
    <property type="entry name" value="EPHRIN"/>
    <property type="match status" value="1"/>
</dbReference>
<dbReference type="PANTHER" id="PTHR11304:SF19">
    <property type="entry name" value="EPHRIN-A1"/>
    <property type="match status" value="1"/>
</dbReference>
<dbReference type="Pfam" id="PF00812">
    <property type="entry name" value="Ephrin"/>
    <property type="match status" value="1"/>
</dbReference>
<dbReference type="PRINTS" id="PR01347">
    <property type="entry name" value="EPHRIN"/>
</dbReference>
<dbReference type="SUPFAM" id="SSF49503">
    <property type="entry name" value="Cupredoxins"/>
    <property type="match status" value="1"/>
</dbReference>
<dbReference type="PROSITE" id="PS01299">
    <property type="entry name" value="EPHRIN_RBD_1"/>
    <property type="match status" value="1"/>
</dbReference>
<dbReference type="PROSITE" id="PS51551">
    <property type="entry name" value="EPHRIN_RBD_2"/>
    <property type="match status" value="1"/>
</dbReference>